<gene>
    <name type="primary">rpl22</name>
</gene>
<accession>A1E9W4</accession>
<geneLocation type="chloroplast"/>
<sequence>MTSFKLVKYTPRIKKKKGLRKLARKVPTDRLLKFERVFKAQKRIHMSVFKAQRVLDEIRWRYYEETVMILNLMPYRASYPILKLVYSAAANATHYRDFDKTNLFITKAEVSRSTIMKKFRPRARGRSYSIKKTMCNITIVLNIVKKSK</sequence>
<evidence type="ECO:0000250" key="1"/>
<evidence type="ECO:0000305" key="2"/>
<dbReference type="EMBL" id="EF115542">
    <property type="protein sequence ID" value="ABK79535.1"/>
    <property type="molecule type" value="Genomic_DNA"/>
</dbReference>
<dbReference type="RefSeq" id="YP_899447.1">
    <property type="nucleotide sequence ID" value="NC_008602.1"/>
</dbReference>
<dbReference type="SMR" id="A1E9W4"/>
<dbReference type="FunCoup" id="A1E9W4">
    <property type="interactions" value="222"/>
</dbReference>
<dbReference type="STRING" id="4558.A1E9W4"/>
<dbReference type="GeneID" id="4549091"/>
<dbReference type="KEGG" id="sbi:4549091"/>
<dbReference type="InParanoid" id="A1E9W4"/>
<dbReference type="OrthoDB" id="1840754at2759"/>
<dbReference type="Proteomes" id="UP000000768">
    <property type="component" value="Chloroplast"/>
</dbReference>
<dbReference type="GO" id="GO:0009507">
    <property type="term" value="C:chloroplast"/>
    <property type="evidence" value="ECO:0007669"/>
    <property type="project" value="UniProtKB-SubCell"/>
</dbReference>
<dbReference type="GO" id="GO:0015934">
    <property type="term" value="C:large ribosomal subunit"/>
    <property type="evidence" value="ECO:0000318"/>
    <property type="project" value="GO_Central"/>
</dbReference>
<dbReference type="GO" id="GO:0019843">
    <property type="term" value="F:rRNA binding"/>
    <property type="evidence" value="ECO:0007669"/>
    <property type="project" value="UniProtKB-UniRule"/>
</dbReference>
<dbReference type="GO" id="GO:0003735">
    <property type="term" value="F:structural constituent of ribosome"/>
    <property type="evidence" value="ECO:0000318"/>
    <property type="project" value="GO_Central"/>
</dbReference>
<dbReference type="GO" id="GO:0006412">
    <property type="term" value="P:translation"/>
    <property type="evidence" value="ECO:0000318"/>
    <property type="project" value="GO_Central"/>
</dbReference>
<dbReference type="CDD" id="cd00336">
    <property type="entry name" value="Ribosomal_L22"/>
    <property type="match status" value="1"/>
</dbReference>
<dbReference type="FunFam" id="3.90.470.10:FF:000004">
    <property type="entry name" value="50S ribosomal protein L22, chloroplastic"/>
    <property type="match status" value="1"/>
</dbReference>
<dbReference type="Gene3D" id="3.90.470.10">
    <property type="entry name" value="Ribosomal protein L22/L17"/>
    <property type="match status" value="1"/>
</dbReference>
<dbReference type="HAMAP" id="MF_01331_B">
    <property type="entry name" value="Ribosomal_uL22_B"/>
    <property type="match status" value="1"/>
</dbReference>
<dbReference type="InterPro" id="IPR001063">
    <property type="entry name" value="Ribosomal_uL22"/>
</dbReference>
<dbReference type="InterPro" id="IPR005727">
    <property type="entry name" value="Ribosomal_uL22_bac/chlpt-type"/>
</dbReference>
<dbReference type="InterPro" id="IPR047867">
    <property type="entry name" value="Ribosomal_uL22_bac/org-type"/>
</dbReference>
<dbReference type="InterPro" id="IPR018260">
    <property type="entry name" value="Ribosomal_uL22_CS"/>
</dbReference>
<dbReference type="InterPro" id="IPR036394">
    <property type="entry name" value="Ribosomal_uL22_sf"/>
</dbReference>
<dbReference type="NCBIfam" id="TIGR01044">
    <property type="entry name" value="rplV_bact"/>
    <property type="match status" value="1"/>
</dbReference>
<dbReference type="PANTHER" id="PTHR13501">
    <property type="entry name" value="CHLOROPLAST 50S RIBOSOMAL PROTEIN L22-RELATED"/>
    <property type="match status" value="1"/>
</dbReference>
<dbReference type="PANTHER" id="PTHR13501:SF10">
    <property type="entry name" value="LARGE RIBOSOMAL SUBUNIT PROTEIN UL22M"/>
    <property type="match status" value="1"/>
</dbReference>
<dbReference type="Pfam" id="PF00237">
    <property type="entry name" value="Ribosomal_L22"/>
    <property type="match status" value="1"/>
</dbReference>
<dbReference type="SUPFAM" id="SSF54843">
    <property type="entry name" value="Ribosomal protein L22"/>
    <property type="match status" value="1"/>
</dbReference>
<dbReference type="PROSITE" id="PS00464">
    <property type="entry name" value="RIBOSOMAL_L22"/>
    <property type="match status" value="1"/>
</dbReference>
<name>RK22_SORBI</name>
<organism>
    <name type="scientific">Sorghum bicolor</name>
    <name type="common">Sorghum</name>
    <name type="synonym">Sorghum vulgare</name>
    <dbReference type="NCBI Taxonomy" id="4558"/>
    <lineage>
        <taxon>Eukaryota</taxon>
        <taxon>Viridiplantae</taxon>
        <taxon>Streptophyta</taxon>
        <taxon>Embryophyta</taxon>
        <taxon>Tracheophyta</taxon>
        <taxon>Spermatophyta</taxon>
        <taxon>Magnoliopsida</taxon>
        <taxon>Liliopsida</taxon>
        <taxon>Poales</taxon>
        <taxon>Poaceae</taxon>
        <taxon>PACMAD clade</taxon>
        <taxon>Panicoideae</taxon>
        <taxon>Andropogonodae</taxon>
        <taxon>Andropogoneae</taxon>
        <taxon>Sorghinae</taxon>
        <taxon>Sorghum</taxon>
    </lineage>
</organism>
<protein>
    <recommendedName>
        <fullName evidence="2">Large ribosomal subunit protein uL22c</fullName>
    </recommendedName>
    <alternativeName>
        <fullName>50S ribosomal protein L22, chloroplastic</fullName>
    </alternativeName>
</protein>
<reference key="1">
    <citation type="journal article" date="2007" name="Theor. Appl. Genet.">
        <title>Complete chloroplast genome sequences of Hordeum vulgare, Sorghum bicolor and Agrostis stolonifera, and comparative analyses with other grass genomes.</title>
        <authorList>
            <person name="Saski C."/>
            <person name="Lee S.-B."/>
            <person name="Fjellheim S."/>
            <person name="Guda C."/>
            <person name="Jansen R.K."/>
            <person name="Luo H."/>
            <person name="Tomkins J."/>
            <person name="Rognli O.A."/>
            <person name="Daniell H."/>
            <person name="Clarke J.L."/>
        </authorList>
    </citation>
    <scope>NUCLEOTIDE SEQUENCE [LARGE SCALE GENOMIC DNA]</scope>
    <source>
        <strain>cv. BTx623</strain>
    </source>
</reference>
<feature type="chain" id="PRO_0000276450" description="Large ribosomal subunit protein uL22c">
    <location>
        <begin position="1"/>
        <end position="148"/>
    </location>
</feature>
<comment type="function">
    <text evidence="1">This protein binds specifically to 23S rRNA.</text>
</comment>
<comment type="function">
    <text evidence="1">The globular domain of the protein is located near the polypeptide exit tunnel on the outside of the subunit, while an extended beta-hairpin is found that lines the wall of the exit tunnel in the center of the 70S ribosome.</text>
</comment>
<comment type="subunit">
    <text evidence="1">Part of the 50S ribosomal subunit.</text>
</comment>
<comment type="subcellular location">
    <subcellularLocation>
        <location>Plastid</location>
        <location>Chloroplast</location>
    </subcellularLocation>
</comment>
<comment type="similarity">
    <text evidence="2">Belongs to the universal ribosomal protein uL22 family.</text>
</comment>
<proteinExistence type="inferred from homology"/>
<keyword id="KW-0150">Chloroplast</keyword>
<keyword id="KW-0934">Plastid</keyword>
<keyword id="KW-1185">Reference proteome</keyword>
<keyword id="KW-0687">Ribonucleoprotein</keyword>
<keyword id="KW-0689">Ribosomal protein</keyword>
<keyword id="KW-0694">RNA-binding</keyword>
<keyword id="KW-0699">rRNA-binding</keyword>